<sequence length="238" mass="27902">MKKAKILSGVLLLCFSSPLISQAATLDVRGGYRSGSHAYETRLKVSEGWQNGWWASMESNTWNTIHDNKKENAALNDVQVEVNYAIKLDDQWTVRPGMLTHFSSNGTRYGPYVKLSWDATKDLKFGIRYRYDWKAYRQQDLSGDMSRDNVHRWDGYVTYHINSDFTFAWQTTLYSKQNDYRYANHKKWATENAFVLQYHMTPDITPYIEYDYLDRQGVYNGRDNLSENSYRIGVSFKL</sequence>
<organism>
    <name type="scientific">Escherichia coli O6:H1 (strain CFT073 / ATCC 700928 / UPEC)</name>
    <dbReference type="NCBI Taxonomy" id="199310"/>
    <lineage>
        <taxon>Bacteria</taxon>
        <taxon>Pseudomonadati</taxon>
        <taxon>Pseudomonadota</taxon>
        <taxon>Gammaproteobacteria</taxon>
        <taxon>Enterobacterales</taxon>
        <taxon>Enterobacteriaceae</taxon>
        <taxon>Escherichia</taxon>
    </lineage>
</organism>
<evidence type="ECO:0000250" key="1">
    <source>
        <dbReference type="UniProtKB" id="P69856"/>
    </source>
</evidence>
<evidence type="ECO:0000255" key="2"/>
<evidence type="ECO:0000305" key="3"/>
<proteinExistence type="inferred from homology"/>
<comment type="function">
    <text evidence="1">Outer membrane channel protein allowing the entry of N-acetylneuraminic acid (Neu5Ac, the most abundant sialic acid on host cell surfaces) into the bacteria. NanC proteins form high-conductance channels which are open at low membrane potentials and which have a weak anion selectivity.</text>
</comment>
<comment type="catalytic activity">
    <reaction evidence="1">
        <text>N-acetylneuraminate(in) = N-acetylneuraminate(out)</text>
        <dbReference type="Rhea" id="RHEA:28991"/>
        <dbReference type="ChEBI" id="CHEBI:35418"/>
    </reaction>
</comment>
<comment type="subunit">
    <text evidence="1">Monomer.</text>
</comment>
<comment type="subcellular location">
    <subcellularLocation>
        <location evidence="1">Cell outer membrane</location>
        <topology evidence="1">Multi-pass membrane protein</topology>
    </subcellularLocation>
</comment>
<comment type="similarity">
    <text evidence="3">Belongs to the oligogalacturonate-specific porin KdgM (TC 1.B.35) family. NanC subfamily.</text>
</comment>
<comment type="sequence caution" evidence="3">
    <conflict type="erroneous initiation">
        <sequence resource="EMBL-CDS" id="AAN83811"/>
    </conflict>
    <text>Extended N-terminus.</text>
</comment>
<name>NANC_ECOL6</name>
<feature type="signal peptide" evidence="2">
    <location>
        <begin position="1"/>
        <end position="23"/>
    </location>
</feature>
<feature type="chain" id="PRO_0000016603" description="N-acetylneuraminic acid outer membrane channel protein NanC">
    <location>
        <begin position="24"/>
        <end position="238"/>
    </location>
</feature>
<feature type="topological domain" description="Periplasmic" evidence="1">
    <location>
        <begin position="24"/>
        <end position="25"/>
    </location>
</feature>
<feature type="transmembrane region" evidence="1">
    <location>
        <begin position="26"/>
        <end position="32"/>
    </location>
</feature>
<feature type="topological domain" description="Extracellular" evidence="1">
    <location>
        <begin position="33"/>
        <end position="39"/>
    </location>
</feature>
<feature type="transmembrane region" evidence="1">
    <location>
        <begin position="40"/>
        <end position="49"/>
    </location>
</feature>
<feature type="topological domain" description="Periplasmic" evidence="1">
    <location>
        <begin position="50"/>
        <end position="52"/>
    </location>
</feature>
<feature type="transmembrane region" evidence="1">
    <location>
        <begin position="53"/>
        <end position="61"/>
    </location>
</feature>
<feature type="topological domain" description="Extracellular" evidence="1">
    <location>
        <begin position="62"/>
        <end position="76"/>
    </location>
</feature>
<feature type="transmembrane region" evidence="1">
    <location>
        <begin position="77"/>
        <end position="86"/>
    </location>
</feature>
<feature type="topological domain" description="Periplasmic" evidence="1">
    <location>
        <begin position="87"/>
        <end position="91"/>
    </location>
</feature>
<feature type="transmembrane region" evidence="1">
    <location>
        <begin position="92"/>
        <end position="102"/>
    </location>
</feature>
<feature type="topological domain" description="Extracellular" evidence="1">
    <location>
        <begin position="103"/>
        <end position="107"/>
    </location>
</feature>
<feature type="transmembrane region" evidence="1">
    <location>
        <begin position="108"/>
        <end position="117"/>
    </location>
</feature>
<feature type="topological domain" description="Periplasmic" evidence="1">
    <location>
        <begin position="118"/>
        <end position="122"/>
    </location>
</feature>
<feature type="transmembrane region" evidence="1">
    <location>
        <begin position="123"/>
        <end position="132"/>
    </location>
</feature>
<feature type="topological domain" description="Extracellular" evidence="1">
    <location>
        <begin position="133"/>
        <end position="151"/>
    </location>
</feature>
<feature type="transmembrane region" evidence="1">
    <location>
        <begin position="152"/>
        <end position="159"/>
    </location>
</feature>
<feature type="topological domain" description="Periplasmic" evidence="1">
    <location>
        <begin position="160"/>
        <end position="164"/>
    </location>
</feature>
<feature type="transmembrane region" evidence="1">
    <location>
        <begin position="165"/>
        <end position="173"/>
    </location>
</feature>
<feature type="topological domain" description="Extracellular" evidence="1">
    <location>
        <begin position="174"/>
        <end position="190"/>
    </location>
</feature>
<feature type="transmembrane region" evidence="1">
    <location>
        <begin position="191"/>
        <end position="200"/>
    </location>
</feature>
<feature type="topological domain" description="Periplasmic" evidence="1">
    <location>
        <begin position="201"/>
        <end position="203"/>
    </location>
</feature>
<feature type="transmembrane region" evidence="1">
    <location>
        <begin position="204"/>
        <end position="212"/>
    </location>
</feature>
<feature type="topological domain" description="Extracellular" evidence="1">
    <location>
        <begin position="213"/>
        <end position="228"/>
    </location>
</feature>
<feature type="transmembrane region" evidence="1">
    <location>
        <begin position="229"/>
        <end position="236"/>
    </location>
</feature>
<feature type="topological domain" description="Periplasmic" evidence="1">
    <location>
        <begin position="237"/>
        <end position="238"/>
    </location>
</feature>
<keyword id="KW-0998">Cell outer membrane</keyword>
<keyword id="KW-0406">Ion transport</keyword>
<keyword id="KW-0472">Membrane</keyword>
<keyword id="KW-0626">Porin</keyword>
<keyword id="KW-1185">Reference proteome</keyword>
<keyword id="KW-0732">Signal</keyword>
<keyword id="KW-0762">Sugar transport</keyword>
<keyword id="KW-0812">Transmembrane</keyword>
<keyword id="KW-1134">Transmembrane beta strand</keyword>
<keyword id="KW-0813">Transport</keyword>
<dbReference type="EMBL" id="AE014075">
    <property type="protein sequence ID" value="AAN83811.1"/>
    <property type="status" value="ALT_INIT"/>
    <property type="molecule type" value="Genomic_DNA"/>
</dbReference>
<dbReference type="RefSeq" id="WP_001304536.1">
    <property type="nucleotide sequence ID" value="NZ_CP051263.1"/>
</dbReference>
<dbReference type="SMR" id="Q8CVG4"/>
<dbReference type="STRING" id="199310.c5389"/>
<dbReference type="KEGG" id="ecc:c5389"/>
<dbReference type="eggNOG" id="COG1452">
    <property type="taxonomic scope" value="Bacteria"/>
</dbReference>
<dbReference type="HOGENOM" id="CLU_081853_2_0_6"/>
<dbReference type="Proteomes" id="UP000001410">
    <property type="component" value="Chromosome"/>
</dbReference>
<dbReference type="GO" id="GO:0009279">
    <property type="term" value="C:cell outer membrane"/>
    <property type="evidence" value="ECO:0007669"/>
    <property type="project" value="UniProtKB-SubCell"/>
</dbReference>
<dbReference type="GO" id="GO:0046930">
    <property type="term" value="C:pore complex"/>
    <property type="evidence" value="ECO:0007669"/>
    <property type="project" value="UniProtKB-KW"/>
</dbReference>
<dbReference type="GO" id="GO:0015288">
    <property type="term" value="F:porin activity"/>
    <property type="evidence" value="ECO:0007669"/>
    <property type="project" value="UniProtKB-KW"/>
</dbReference>
<dbReference type="GO" id="GO:0006811">
    <property type="term" value="P:monoatomic ion transport"/>
    <property type="evidence" value="ECO:0007669"/>
    <property type="project" value="UniProtKB-KW"/>
</dbReference>
<dbReference type="GO" id="GO:0015772">
    <property type="term" value="P:oligosaccharide transport"/>
    <property type="evidence" value="ECO:0007669"/>
    <property type="project" value="TreeGrafter"/>
</dbReference>
<dbReference type="Gene3D" id="2.40.160.40">
    <property type="entry name" value="monomeric porin ompg"/>
    <property type="match status" value="1"/>
</dbReference>
<dbReference type="InterPro" id="IPR053713">
    <property type="entry name" value="Bact_OM_Channel_sf"/>
</dbReference>
<dbReference type="InterPro" id="IPR009331">
    <property type="entry name" value="Oligogalacturonate-sp_porin"/>
</dbReference>
<dbReference type="PANTHER" id="PTHR38105:SF2">
    <property type="entry name" value="N-ACETYLNEURAMINIC ACID OUTER MEMBRANE CHANNEL PROTEIN NANC-RELATED"/>
    <property type="match status" value="1"/>
</dbReference>
<dbReference type="PANTHER" id="PTHR38105">
    <property type="entry name" value="OUTER MEMBRANE PROTEIN-RELATED-RELATED"/>
    <property type="match status" value="1"/>
</dbReference>
<dbReference type="Pfam" id="PF06178">
    <property type="entry name" value="KdgM"/>
    <property type="match status" value="1"/>
</dbReference>
<dbReference type="SUPFAM" id="SSF56935">
    <property type="entry name" value="Porins"/>
    <property type="match status" value="1"/>
</dbReference>
<protein>
    <recommendedName>
        <fullName evidence="1">N-acetylneuraminic acid outer membrane channel protein NanC</fullName>
        <shortName evidence="1">Porin NanC</shortName>
    </recommendedName>
</protein>
<reference key="1">
    <citation type="journal article" date="2002" name="Proc. Natl. Acad. Sci. U.S.A.">
        <title>Extensive mosaic structure revealed by the complete genome sequence of uropathogenic Escherichia coli.</title>
        <authorList>
            <person name="Welch R.A."/>
            <person name="Burland V."/>
            <person name="Plunkett G. III"/>
            <person name="Redford P."/>
            <person name="Roesch P."/>
            <person name="Rasko D."/>
            <person name="Buckles E.L."/>
            <person name="Liou S.-R."/>
            <person name="Boutin A."/>
            <person name="Hackett J."/>
            <person name="Stroud D."/>
            <person name="Mayhew G.F."/>
            <person name="Rose D.J."/>
            <person name="Zhou S."/>
            <person name="Schwartz D.C."/>
            <person name="Perna N.T."/>
            <person name="Mobley H.L.T."/>
            <person name="Donnenberg M.S."/>
            <person name="Blattner F.R."/>
        </authorList>
    </citation>
    <scope>NUCLEOTIDE SEQUENCE [LARGE SCALE GENOMIC DNA]</scope>
    <source>
        <strain>CFT073 / ATCC 700928 / UPEC</strain>
    </source>
</reference>
<accession>Q8CVG4</accession>
<gene>
    <name type="primary">nanC</name>
    <name type="ordered locus">c5389</name>
</gene>